<comment type="similarity">
    <text evidence="1">Belongs to the bacterial ribosomal protein bL36 family.</text>
</comment>
<name>RL36_CLONN</name>
<proteinExistence type="inferred from homology"/>
<organism>
    <name type="scientific">Clostridium novyi (strain NT)</name>
    <dbReference type="NCBI Taxonomy" id="386415"/>
    <lineage>
        <taxon>Bacteria</taxon>
        <taxon>Bacillati</taxon>
        <taxon>Bacillota</taxon>
        <taxon>Clostridia</taxon>
        <taxon>Eubacteriales</taxon>
        <taxon>Clostridiaceae</taxon>
        <taxon>Clostridium</taxon>
    </lineage>
</organism>
<sequence>MKVRPSVKPICEKCKVIRRKGKVMVICENPKHKQKQG</sequence>
<reference key="1">
    <citation type="journal article" date="2006" name="Nat. Biotechnol.">
        <title>The genome and transcriptomes of the anti-tumor agent Clostridium novyi-NT.</title>
        <authorList>
            <person name="Bettegowda C."/>
            <person name="Huang X."/>
            <person name="Lin J."/>
            <person name="Cheong I."/>
            <person name="Kohli M."/>
            <person name="Szabo S.A."/>
            <person name="Zhang X."/>
            <person name="Diaz L.A. Jr."/>
            <person name="Velculescu V.E."/>
            <person name="Parmigiani G."/>
            <person name="Kinzler K.W."/>
            <person name="Vogelstein B."/>
            <person name="Zhou S."/>
        </authorList>
    </citation>
    <scope>NUCLEOTIDE SEQUENCE [LARGE SCALE GENOMIC DNA]</scope>
    <source>
        <strain>NT</strain>
    </source>
</reference>
<keyword id="KW-1185">Reference proteome</keyword>
<keyword id="KW-0687">Ribonucleoprotein</keyword>
<keyword id="KW-0689">Ribosomal protein</keyword>
<evidence type="ECO:0000255" key="1">
    <source>
        <dbReference type="HAMAP-Rule" id="MF_00251"/>
    </source>
</evidence>
<evidence type="ECO:0000305" key="2"/>
<accession>A0PXX1</accession>
<dbReference type="EMBL" id="CP000382">
    <property type="protein sequence ID" value="ABK61258.1"/>
    <property type="molecule type" value="Genomic_DNA"/>
</dbReference>
<dbReference type="RefSeq" id="WP_003156543.1">
    <property type="nucleotide sequence ID" value="NC_008593.1"/>
</dbReference>
<dbReference type="SMR" id="A0PXX1"/>
<dbReference type="STRING" id="386415.NT01CX_1140"/>
<dbReference type="GeneID" id="97412846"/>
<dbReference type="KEGG" id="cno:NT01CX_1140"/>
<dbReference type="eggNOG" id="COG0257">
    <property type="taxonomic scope" value="Bacteria"/>
</dbReference>
<dbReference type="HOGENOM" id="CLU_135723_6_2_9"/>
<dbReference type="Proteomes" id="UP000008220">
    <property type="component" value="Chromosome"/>
</dbReference>
<dbReference type="GO" id="GO:0005737">
    <property type="term" value="C:cytoplasm"/>
    <property type="evidence" value="ECO:0007669"/>
    <property type="project" value="UniProtKB-ARBA"/>
</dbReference>
<dbReference type="GO" id="GO:1990904">
    <property type="term" value="C:ribonucleoprotein complex"/>
    <property type="evidence" value="ECO:0007669"/>
    <property type="project" value="UniProtKB-KW"/>
</dbReference>
<dbReference type="GO" id="GO:0005840">
    <property type="term" value="C:ribosome"/>
    <property type="evidence" value="ECO:0007669"/>
    <property type="project" value="UniProtKB-KW"/>
</dbReference>
<dbReference type="GO" id="GO:0003735">
    <property type="term" value="F:structural constituent of ribosome"/>
    <property type="evidence" value="ECO:0007669"/>
    <property type="project" value="InterPro"/>
</dbReference>
<dbReference type="GO" id="GO:0006412">
    <property type="term" value="P:translation"/>
    <property type="evidence" value="ECO:0007669"/>
    <property type="project" value="UniProtKB-UniRule"/>
</dbReference>
<dbReference type="HAMAP" id="MF_00251">
    <property type="entry name" value="Ribosomal_bL36"/>
    <property type="match status" value="1"/>
</dbReference>
<dbReference type="InterPro" id="IPR000473">
    <property type="entry name" value="Ribosomal_bL36"/>
</dbReference>
<dbReference type="InterPro" id="IPR035977">
    <property type="entry name" value="Ribosomal_bL36_sp"/>
</dbReference>
<dbReference type="NCBIfam" id="TIGR01022">
    <property type="entry name" value="rpmJ_bact"/>
    <property type="match status" value="1"/>
</dbReference>
<dbReference type="PANTHER" id="PTHR42888">
    <property type="entry name" value="50S RIBOSOMAL PROTEIN L36, CHLOROPLASTIC"/>
    <property type="match status" value="1"/>
</dbReference>
<dbReference type="PANTHER" id="PTHR42888:SF1">
    <property type="entry name" value="LARGE RIBOSOMAL SUBUNIT PROTEIN BL36C"/>
    <property type="match status" value="1"/>
</dbReference>
<dbReference type="Pfam" id="PF00444">
    <property type="entry name" value="Ribosomal_L36"/>
    <property type="match status" value="1"/>
</dbReference>
<dbReference type="SUPFAM" id="SSF57840">
    <property type="entry name" value="Ribosomal protein L36"/>
    <property type="match status" value="1"/>
</dbReference>
<dbReference type="PROSITE" id="PS00828">
    <property type="entry name" value="RIBOSOMAL_L36"/>
    <property type="match status" value="1"/>
</dbReference>
<protein>
    <recommendedName>
        <fullName evidence="1">Large ribosomal subunit protein bL36</fullName>
    </recommendedName>
    <alternativeName>
        <fullName evidence="2">50S ribosomal protein L36</fullName>
    </alternativeName>
</protein>
<gene>
    <name evidence="1" type="primary">rpmJ</name>
    <name type="ordered locus">NT01CX_1140</name>
</gene>
<feature type="chain" id="PRO_0000302184" description="Large ribosomal subunit protein bL36">
    <location>
        <begin position="1"/>
        <end position="37"/>
    </location>
</feature>